<reference key="1">
    <citation type="journal article" date="1998" name="J. Biol. Chem.">
        <title>Identification of a novel type of silk protein and regulation of its expression.</title>
        <authorList>
            <person name="Zurovec M."/>
            <person name="Yang C."/>
            <person name="Kodrik D."/>
            <person name="Sehnal F."/>
        </authorList>
    </citation>
    <scope>NUCLEOTIDE SEQUENCE [MRNA]</scope>
    <scope>PROTEIN SEQUENCE OF 18-31</scope>
    <source>
        <tissue>Silk gland</tissue>
    </source>
</reference>
<comment type="subcellular location">
    <subcellularLocation>
        <location>Secreted</location>
    </subcellularLocation>
</comment>
<comment type="tissue specificity">
    <text>Produced by both the posterior (PSG) and middle (MSG) sections of silk glands.</text>
</comment>
<comment type="developmental stage">
    <text>Seroin mRNA is high in the silk glands of feeding larvae, declines at ecdysis, reaches a maximum during cocoon spinning, and thereafter rapidly drops to an undetectable level.</text>
</comment>
<organism>
    <name type="scientific">Galleria mellonella</name>
    <name type="common">Greater wax moth</name>
    <dbReference type="NCBI Taxonomy" id="7137"/>
    <lineage>
        <taxon>Eukaryota</taxon>
        <taxon>Metazoa</taxon>
        <taxon>Ecdysozoa</taxon>
        <taxon>Arthropoda</taxon>
        <taxon>Hexapoda</taxon>
        <taxon>Insecta</taxon>
        <taxon>Pterygota</taxon>
        <taxon>Neoptera</taxon>
        <taxon>Endopterygota</taxon>
        <taxon>Lepidoptera</taxon>
        <taxon>Glossata</taxon>
        <taxon>Ditrysia</taxon>
        <taxon>Pyraloidea</taxon>
        <taxon>Pyralidae</taxon>
        <taxon>Galleriinae</taxon>
        <taxon>Galleria</taxon>
    </lineage>
</organism>
<sequence length="167" mass="18088">MATKILIFLSFVALSSAGFVWVDDDNNSFPKLRQLYVPPLPQPPPLPNIPGLPQPPPLPQPPPLFGFDFSPILPIPPIPPIPPILPTPPFINIPAPEDIKNIKPKPGQFFNGISVKSRSGYALDKDGNRVKTGGTAVLINDNGEVNETIVGDNPPKFEESRKESSSN</sequence>
<dbReference type="EMBL" id="AF009828">
    <property type="protein sequence ID" value="AAC25171.1"/>
    <property type="molecule type" value="mRNA"/>
</dbReference>
<dbReference type="InParanoid" id="O76192"/>
<dbReference type="Proteomes" id="UP000504614">
    <property type="component" value="Unplaced"/>
</dbReference>
<dbReference type="GO" id="GO:0005576">
    <property type="term" value="C:extracellular region"/>
    <property type="evidence" value="ECO:0007669"/>
    <property type="project" value="UniProtKB-SubCell"/>
</dbReference>
<accession>O76192</accession>
<proteinExistence type="evidence at protein level"/>
<protein>
    <recommendedName>
        <fullName>Seroin</fullName>
    </recommendedName>
    <alternativeName>
        <fullName>Silk 23 kDa glycoprotein</fullName>
    </alternativeName>
</protein>
<evidence type="ECO:0000255" key="1"/>
<evidence type="ECO:0000256" key="2">
    <source>
        <dbReference type="SAM" id="MobiDB-lite"/>
    </source>
</evidence>
<evidence type="ECO:0000269" key="3">
    <source>
    </source>
</evidence>
<name>SERO_GALME</name>
<keyword id="KW-0903">Direct protein sequencing</keyword>
<keyword id="KW-0325">Glycoprotein</keyword>
<keyword id="KW-1185">Reference proteome</keyword>
<keyword id="KW-0677">Repeat</keyword>
<keyword id="KW-0964">Secreted</keyword>
<keyword id="KW-0732">Signal</keyword>
<keyword id="KW-0737">Silk protein</keyword>
<feature type="signal peptide" evidence="3">
    <location>
        <begin position="1"/>
        <end position="17"/>
    </location>
</feature>
<feature type="chain" id="PRO_0000022322" description="Seroin">
    <location>
        <begin position="18"/>
        <end position="167"/>
    </location>
</feature>
<feature type="repeat" description="1-1">
    <location>
        <begin position="38"/>
        <end position="46"/>
    </location>
</feature>
<feature type="repeat" description="1-2">
    <location>
        <begin position="56"/>
        <end position="64"/>
    </location>
</feature>
<feature type="repeat" description="2-1">
    <location>
        <begin position="76"/>
        <end position="78"/>
    </location>
</feature>
<feature type="repeat" description="2-2">
    <location>
        <begin position="79"/>
        <end position="81"/>
    </location>
</feature>
<feature type="repeat" description="2-3">
    <location>
        <begin position="82"/>
        <end position="84"/>
    </location>
</feature>
<feature type="region of interest" description="Disordered" evidence="2">
    <location>
        <begin position="145"/>
        <end position="167"/>
    </location>
</feature>
<feature type="compositionally biased region" description="Basic and acidic residues" evidence="2">
    <location>
        <begin position="155"/>
        <end position="167"/>
    </location>
</feature>
<feature type="glycosylation site" description="N-linked (GlcNAc...) asparagine" evidence="1">
    <location>
        <position position="26"/>
    </location>
</feature>
<feature type="glycosylation site" description="N-linked (GlcNAc...) asparagine" evidence="1">
    <location>
        <position position="146"/>
    </location>
</feature>